<comment type="subunit">
    <text evidence="1">Part of the 50S ribosomal subunit. Contacts protein L32.</text>
</comment>
<comment type="similarity">
    <text evidence="1">Belongs to the bacterial ribosomal protein bL17 family.</text>
</comment>
<protein>
    <recommendedName>
        <fullName evidence="1">Large ribosomal subunit protein bL17</fullName>
    </recommendedName>
    <alternativeName>
        <fullName evidence="2">50S ribosomal protein L17</fullName>
    </alternativeName>
</protein>
<sequence length="141" mass="16152">MQHARKKFRVGRTSSHNRCMLANMLKSLIHNERIETTLPKAKELRRHADKMITLAKKNTLAARRLAVGRLMVRYNTLTSKEARQVKAGDLSAYNVDRRVIGKLFDVLATRFSSRNGGYTRILKLQNRVGDNAQKCIIEFLA</sequence>
<name>RL17_CHLTA</name>
<organism>
    <name type="scientific">Chlamydia trachomatis serovar A (strain ATCC VR-571B / DSM 19440 / HAR-13)</name>
    <dbReference type="NCBI Taxonomy" id="315277"/>
    <lineage>
        <taxon>Bacteria</taxon>
        <taxon>Pseudomonadati</taxon>
        <taxon>Chlamydiota</taxon>
        <taxon>Chlamydiia</taxon>
        <taxon>Chlamydiales</taxon>
        <taxon>Chlamydiaceae</taxon>
        <taxon>Chlamydia/Chlamydophila group</taxon>
        <taxon>Chlamydia</taxon>
    </lineage>
</organism>
<feature type="chain" id="PRO_1000055799" description="Large ribosomal subunit protein bL17">
    <location>
        <begin position="1"/>
        <end position="141"/>
    </location>
</feature>
<dbReference type="EMBL" id="CP000051">
    <property type="protein sequence ID" value="AAX50781.1"/>
    <property type="molecule type" value="Genomic_DNA"/>
</dbReference>
<dbReference type="RefSeq" id="WP_009871870.1">
    <property type="nucleotide sequence ID" value="NC_007429.1"/>
</dbReference>
<dbReference type="SMR" id="Q3KLJ1"/>
<dbReference type="KEGG" id="cta:CTA_0555"/>
<dbReference type="HOGENOM" id="CLU_074407_2_0_0"/>
<dbReference type="Proteomes" id="UP000002532">
    <property type="component" value="Chromosome"/>
</dbReference>
<dbReference type="GO" id="GO:0022625">
    <property type="term" value="C:cytosolic large ribosomal subunit"/>
    <property type="evidence" value="ECO:0007669"/>
    <property type="project" value="TreeGrafter"/>
</dbReference>
<dbReference type="GO" id="GO:0003735">
    <property type="term" value="F:structural constituent of ribosome"/>
    <property type="evidence" value="ECO:0007669"/>
    <property type="project" value="InterPro"/>
</dbReference>
<dbReference type="GO" id="GO:0006412">
    <property type="term" value="P:translation"/>
    <property type="evidence" value="ECO:0007669"/>
    <property type="project" value="UniProtKB-UniRule"/>
</dbReference>
<dbReference type="FunFam" id="3.90.1030.10:FF:000003">
    <property type="entry name" value="50S ribosomal protein L17"/>
    <property type="match status" value="1"/>
</dbReference>
<dbReference type="Gene3D" id="3.90.1030.10">
    <property type="entry name" value="Ribosomal protein L17"/>
    <property type="match status" value="1"/>
</dbReference>
<dbReference type="HAMAP" id="MF_01368">
    <property type="entry name" value="Ribosomal_bL17"/>
    <property type="match status" value="1"/>
</dbReference>
<dbReference type="InterPro" id="IPR000456">
    <property type="entry name" value="Ribosomal_bL17"/>
</dbReference>
<dbReference type="InterPro" id="IPR047859">
    <property type="entry name" value="Ribosomal_bL17_CS"/>
</dbReference>
<dbReference type="InterPro" id="IPR036373">
    <property type="entry name" value="Ribosomal_bL17_sf"/>
</dbReference>
<dbReference type="NCBIfam" id="TIGR00059">
    <property type="entry name" value="L17"/>
    <property type="match status" value="1"/>
</dbReference>
<dbReference type="PANTHER" id="PTHR14413:SF16">
    <property type="entry name" value="LARGE RIBOSOMAL SUBUNIT PROTEIN BL17M"/>
    <property type="match status" value="1"/>
</dbReference>
<dbReference type="PANTHER" id="PTHR14413">
    <property type="entry name" value="RIBOSOMAL PROTEIN L17"/>
    <property type="match status" value="1"/>
</dbReference>
<dbReference type="Pfam" id="PF01196">
    <property type="entry name" value="Ribosomal_L17"/>
    <property type="match status" value="1"/>
</dbReference>
<dbReference type="SUPFAM" id="SSF64263">
    <property type="entry name" value="Prokaryotic ribosomal protein L17"/>
    <property type="match status" value="1"/>
</dbReference>
<dbReference type="PROSITE" id="PS01167">
    <property type="entry name" value="RIBOSOMAL_L17"/>
    <property type="match status" value="1"/>
</dbReference>
<proteinExistence type="inferred from homology"/>
<reference key="1">
    <citation type="journal article" date="2005" name="Infect. Immun.">
        <title>Comparative genomic analysis of Chlamydia trachomatis oculotropic and genitotropic strains.</title>
        <authorList>
            <person name="Carlson J.H."/>
            <person name="Porcella S.F."/>
            <person name="McClarty G."/>
            <person name="Caldwell H.D."/>
        </authorList>
    </citation>
    <scope>NUCLEOTIDE SEQUENCE [LARGE SCALE GENOMIC DNA]</scope>
    <source>
        <strain>ATCC VR-571B / DSM 19440 / HAR-13</strain>
    </source>
</reference>
<gene>
    <name evidence="1" type="primary">rplQ</name>
    <name type="ordered locus">CTA_0555</name>
</gene>
<evidence type="ECO:0000255" key="1">
    <source>
        <dbReference type="HAMAP-Rule" id="MF_01368"/>
    </source>
</evidence>
<evidence type="ECO:0000305" key="2"/>
<keyword id="KW-0687">Ribonucleoprotein</keyword>
<keyword id="KW-0689">Ribosomal protein</keyword>
<accession>Q3KLJ1</accession>